<organism>
    <name type="scientific">Daucus carota</name>
    <name type="common">Wild carrot</name>
    <dbReference type="NCBI Taxonomy" id="4039"/>
    <lineage>
        <taxon>Eukaryota</taxon>
        <taxon>Viridiplantae</taxon>
        <taxon>Streptophyta</taxon>
        <taxon>Embryophyta</taxon>
        <taxon>Tracheophyta</taxon>
        <taxon>Spermatophyta</taxon>
        <taxon>Magnoliopsida</taxon>
        <taxon>eudicotyledons</taxon>
        <taxon>Gunneridae</taxon>
        <taxon>Pentapetalae</taxon>
        <taxon>asterids</taxon>
        <taxon>campanulids</taxon>
        <taxon>Apiales</taxon>
        <taxon>Apiaceae</taxon>
        <taxon>Apioideae</taxon>
        <taxon>Scandiceae</taxon>
        <taxon>Daucinae</taxon>
        <taxon>Daucus</taxon>
        <taxon>Daucus sect. Daucus</taxon>
    </lineage>
</organism>
<geneLocation type="chloroplast"/>
<comment type="function">
    <text evidence="1">May help in the organization of the PsaL subunit.</text>
</comment>
<comment type="subcellular location">
    <subcellularLocation>
        <location evidence="1">Plastid</location>
        <location evidence="1">Chloroplast thylakoid membrane</location>
        <topology evidence="1">Single-pass membrane protein</topology>
    </subcellularLocation>
</comment>
<comment type="similarity">
    <text evidence="1">Belongs to the PsaI family.</text>
</comment>
<keyword id="KW-0150">Chloroplast</keyword>
<keyword id="KW-0472">Membrane</keyword>
<keyword id="KW-0602">Photosynthesis</keyword>
<keyword id="KW-0603">Photosystem I</keyword>
<keyword id="KW-0934">Plastid</keyword>
<keyword id="KW-0793">Thylakoid</keyword>
<keyword id="KW-0812">Transmembrane</keyword>
<keyword id="KW-1133">Transmembrane helix</keyword>
<dbReference type="EMBL" id="DQ898156">
    <property type="protein sequence ID" value="ABI32434.1"/>
    <property type="molecule type" value="Genomic_DNA"/>
</dbReference>
<dbReference type="RefSeq" id="YP_740127.1">
    <property type="nucleotide sequence ID" value="NC_008325.1"/>
</dbReference>
<dbReference type="SMR" id="Q0G9V2"/>
<dbReference type="GeneID" id="4266753"/>
<dbReference type="GO" id="GO:0009535">
    <property type="term" value="C:chloroplast thylakoid membrane"/>
    <property type="evidence" value="ECO:0007669"/>
    <property type="project" value="UniProtKB-SubCell"/>
</dbReference>
<dbReference type="GO" id="GO:0009522">
    <property type="term" value="C:photosystem I"/>
    <property type="evidence" value="ECO:0007669"/>
    <property type="project" value="UniProtKB-KW"/>
</dbReference>
<dbReference type="GO" id="GO:0015979">
    <property type="term" value="P:photosynthesis"/>
    <property type="evidence" value="ECO:0007669"/>
    <property type="project" value="UniProtKB-UniRule"/>
</dbReference>
<dbReference type="HAMAP" id="MF_00431">
    <property type="entry name" value="PSI_PsaI"/>
    <property type="match status" value="1"/>
</dbReference>
<dbReference type="InterPro" id="IPR001302">
    <property type="entry name" value="PSI_PsaI"/>
</dbReference>
<dbReference type="InterPro" id="IPR036357">
    <property type="entry name" value="PSI_PsaI_sf"/>
</dbReference>
<dbReference type="NCBIfam" id="TIGR03052">
    <property type="entry name" value="PS_I_psaI"/>
    <property type="match status" value="1"/>
</dbReference>
<dbReference type="PANTHER" id="PTHR35775">
    <property type="match status" value="1"/>
</dbReference>
<dbReference type="PANTHER" id="PTHR35775:SF2">
    <property type="entry name" value="PHOTOSYSTEM I REACTION CENTER SUBUNIT VIII"/>
    <property type="match status" value="1"/>
</dbReference>
<dbReference type="Pfam" id="PF00796">
    <property type="entry name" value="PSI_8"/>
    <property type="match status" value="1"/>
</dbReference>
<dbReference type="SUPFAM" id="SSF81540">
    <property type="entry name" value="Subunit VIII of photosystem I reaction centre, PsaI"/>
    <property type="match status" value="1"/>
</dbReference>
<reference key="1">
    <citation type="journal article" date="2006" name="BMC Genomics">
        <title>Complete plastid genome sequence of Daucus carota: implications for biotechnology and phylogeny of angiosperms.</title>
        <authorList>
            <person name="Ruhlman T."/>
            <person name="Lee S.-B."/>
            <person name="Jansen R.K."/>
            <person name="Hostetler J.B."/>
            <person name="Tallon L.J."/>
            <person name="Town C.D."/>
            <person name="Daniell H."/>
        </authorList>
    </citation>
    <scope>NUCLEOTIDE SEQUENCE [LARGE SCALE GENOMIC DNA]</scope>
    <source>
        <strain>cv. Danvers Half-long</strain>
    </source>
</reference>
<sequence length="36" mass="3951">MTTFDFPSVLVPLVGLIFPAMAMASLFLHVQNNKTV</sequence>
<evidence type="ECO:0000255" key="1">
    <source>
        <dbReference type="HAMAP-Rule" id="MF_00431"/>
    </source>
</evidence>
<accession>Q0G9V2</accession>
<feature type="chain" id="PRO_0000276018" description="Photosystem I reaction center subunit VIII">
    <location>
        <begin position="1"/>
        <end position="36"/>
    </location>
</feature>
<feature type="transmembrane region" description="Helical" evidence="1">
    <location>
        <begin position="8"/>
        <end position="28"/>
    </location>
</feature>
<gene>
    <name evidence="1" type="primary">psaI</name>
</gene>
<name>PSAI_DAUCA</name>
<protein>
    <recommendedName>
        <fullName evidence="1">Photosystem I reaction center subunit VIII</fullName>
        <shortName evidence="1">PSI-I</shortName>
    </recommendedName>
</protein>
<proteinExistence type="inferred from homology"/>